<protein>
    <recommendedName>
        <fullName>Uncharacterized protein HI_0575</fullName>
    </recommendedName>
</protein>
<keyword id="KW-1185">Reference proteome</keyword>
<dbReference type="EMBL" id="L42023">
    <property type="protein sequence ID" value="AAC22233.1"/>
    <property type="molecule type" value="Genomic_DNA"/>
</dbReference>
<dbReference type="PIR" id="B64155">
    <property type="entry name" value="B64155"/>
</dbReference>
<dbReference type="RefSeq" id="NP_438732.1">
    <property type="nucleotide sequence ID" value="NC_000907.1"/>
</dbReference>
<dbReference type="STRING" id="71421.HI_0575"/>
<dbReference type="DNASU" id="950683"/>
<dbReference type="EnsemblBacteria" id="AAC22233">
    <property type="protein sequence ID" value="AAC22233"/>
    <property type="gene ID" value="HI_0575"/>
</dbReference>
<dbReference type="KEGG" id="hin:HI_0575"/>
<dbReference type="PATRIC" id="fig|71421.8.peg.595"/>
<dbReference type="eggNOG" id="COG2964">
    <property type="taxonomic scope" value="Bacteria"/>
</dbReference>
<dbReference type="HOGENOM" id="CLU_080179_3_0_6"/>
<dbReference type="OrthoDB" id="9796595at2"/>
<dbReference type="PhylomeDB" id="P44761"/>
<dbReference type="BioCyc" id="HINF71421:G1GJ1-587-MONOMER"/>
<dbReference type="Proteomes" id="UP000000579">
    <property type="component" value="Chromosome"/>
</dbReference>
<dbReference type="GO" id="GO:0005829">
    <property type="term" value="C:cytosol"/>
    <property type="evidence" value="ECO:0000318"/>
    <property type="project" value="GO_Central"/>
</dbReference>
<dbReference type="InterPro" id="IPR039446">
    <property type="entry name" value="DauR-like"/>
</dbReference>
<dbReference type="InterPro" id="IPR039445">
    <property type="entry name" value="DauR-like_HTH"/>
</dbReference>
<dbReference type="InterPro" id="IPR013559">
    <property type="entry name" value="YheO"/>
</dbReference>
<dbReference type="PANTHER" id="PTHR35568">
    <property type="entry name" value="TRANSCRIPTIONAL REGULATOR DAUR"/>
    <property type="match status" value="1"/>
</dbReference>
<dbReference type="PANTHER" id="PTHR35568:SF1">
    <property type="entry name" value="TRANSCRIPTIONAL REGULATOR DAUR"/>
    <property type="match status" value="1"/>
</dbReference>
<dbReference type="Pfam" id="PF13309">
    <property type="entry name" value="HTH_22"/>
    <property type="match status" value="1"/>
</dbReference>
<dbReference type="Pfam" id="PF08348">
    <property type="entry name" value="PAS_6"/>
    <property type="match status" value="1"/>
</dbReference>
<feature type="chain" id="PRO_0000169512" description="Uncharacterized protein HI_0575">
    <location>
        <begin position="1"/>
        <end position="221"/>
    </location>
</feature>
<gene>
    <name type="ordered locus">HI_0575</name>
</gene>
<reference key="1">
    <citation type="journal article" date="1995" name="Science">
        <title>Whole-genome random sequencing and assembly of Haemophilus influenzae Rd.</title>
        <authorList>
            <person name="Fleischmann R.D."/>
            <person name="Adams M.D."/>
            <person name="White O."/>
            <person name="Clayton R.A."/>
            <person name="Kirkness E.F."/>
            <person name="Kerlavage A.R."/>
            <person name="Bult C.J."/>
            <person name="Tomb J.-F."/>
            <person name="Dougherty B.A."/>
            <person name="Merrick J.M."/>
            <person name="McKenney K."/>
            <person name="Sutton G.G."/>
            <person name="FitzHugh W."/>
            <person name="Fields C.A."/>
            <person name="Gocayne J.D."/>
            <person name="Scott J.D."/>
            <person name="Shirley R."/>
            <person name="Liu L.-I."/>
            <person name="Glodek A."/>
            <person name="Kelley J.M."/>
            <person name="Weidman J.F."/>
            <person name="Phillips C.A."/>
            <person name="Spriggs T."/>
            <person name="Hedblom E."/>
            <person name="Cotton M.D."/>
            <person name="Utterback T.R."/>
            <person name="Hanna M.C."/>
            <person name="Nguyen D.T."/>
            <person name="Saudek D.M."/>
            <person name="Brandon R.C."/>
            <person name="Fine L.D."/>
            <person name="Fritchman J.L."/>
            <person name="Fuhrmann J.L."/>
            <person name="Geoghagen N.S.M."/>
            <person name="Gnehm C.L."/>
            <person name="McDonald L.A."/>
            <person name="Small K.V."/>
            <person name="Fraser C.M."/>
            <person name="Smith H.O."/>
            <person name="Venter J.C."/>
        </authorList>
    </citation>
    <scope>NUCLEOTIDE SEQUENCE [LARGE SCALE GENOMIC DNA]</scope>
    <source>
        <strain>ATCC 51907 / DSM 11121 / KW20 / Rd</strain>
    </source>
</reference>
<evidence type="ECO:0000305" key="1"/>
<organism>
    <name type="scientific">Haemophilus influenzae (strain ATCC 51907 / DSM 11121 / KW20 / Rd)</name>
    <dbReference type="NCBI Taxonomy" id="71421"/>
    <lineage>
        <taxon>Bacteria</taxon>
        <taxon>Pseudomonadati</taxon>
        <taxon>Pseudomonadota</taxon>
        <taxon>Gammaproteobacteria</taxon>
        <taxon>Pasteurellales</taxon>
        <taxon>Pasteurellaceae</taxon>
        <taxon>Haemophilus</taxon>
    </lineage>
</organism>
<sequence>MTLNDKYPFTDEDQAIINSYKAVVDGVSALIGEHCEIVLHSLENIEHSAICIANGHNTNRQVGSPITDLALRSLRNMQSESVSKPYFTRAKGSVLMKSVTIAIRNKTQRIIGLLCININLDVPVSQFLQCFMLTEHTNETSSVNFANSVEDLVAQTIEKTIEEVNADRAVANNTKNRQIVLSLYEKGIFDIKDAINLVAERLDISRHTVYLYIRQIKQEQE</sequence>
<proteinExistence type="predicted"/>
<accession>P44761</accession>
<comment type="similarity">
    <text evidence="1">To E.coli YheO.</text>
</comment>
<name>Y575_HAEIN</name>